<organism>
    <name type="scientific">Caenorhabditis elegans</name>
    <dbReference type="NCBI Taxonomy" id="6239"/>
    <lineage>
        <taxon>Eukaryota</taxon>
        <taxon>Metazoa</taxon>
        <taxon>Ecdysozoa</taxon>
        <taxon>Nematoda</taxon>
        <taxon>Chromadorea</taxon>
        <taxon>Rhabditida</taxon>
        <taxon>Rhabditina</taxon>
        <taxon>Rhabditomorpha</taxon>
        <taxon>Rhabditoidea</taxon>
        <taxon>Rhabditidae</taxon>
        <taxon>Peloderinae</taxon>
        <taxon>Caenorhabditis</taxon>
    </lineage>
</organism>
<reference key="1">
    <citation type="journal article" date="1998" name="Science">
        <title>Genome sequence of the nematode C. elegans: a platform for investigating biology.</title>
        <authorList>
            <consortium name="The C. elegans sequencing consortium"/>
        </authorList>
    </citation>
    <scope>NUCLEOTIDE SEQUENCE [LARGE SCALE GENOMIC DNA]</scope>
    <source>
        <strain>Bristol N2</strain>
    </source>
</reference>
<gene>
    <name evidence="6" type="primary">srpa-68</name>
    <name evidence="6" type="ORF">F55C5.8</name>
</gene>
<sequence>MTNDVEMKSETEELPPFPTVHILQVVKDAQQQHGLRHGDYARYRKYCAAKLERMRKALKFTNSHNCQKKRKAKFVKKWLSVESVQNVQFLNFGIFESERRYAEAMIDKITLEDNPEKSRKKFSMINSLRKAVLHATNLEKIVQESERFDAPTKLEAQAYAAWMRGMCSFESRNWQKASESLKLAKTVYEKLAEATNNTTLSSIFKGRCREIQPQLRLCEFNIAESPGAVGTMTELMELRMQMGEGGDSSVDKLISEMRASATSAEVVTIEWGGAKSTVDDEKAKQVVQEWKQTEVELAQCQTPKEKMALFEKATADTRDAIDRISDIIRRKSSENADTTVLQSIKAYLEFLKMNGTASRYLAIIDNTKSEKKSKPQDLLRLYDSVIEIYKEVAEIPGADHDKNLIQAFEVKVEYYRAFRCFYMASSYSALHKYSEAAALFDRTVSRVQDAEGKLKKLKSSSFITNETQSSLNELRSEVESAKVTVRAARLASAAGDVKTDSELAKIIDKRPLLETVNEWRQWDVRNSLKDKKTIPVASLPPAFIPMPNKPIFFDLANFHLTMPNVDDRLEKLQKDRDATPKKAAKGSSAAAASSKTSNQEEEEQQGLTGMLSGWKKSFWGNK</sequence>
<dbReference type="EMBL" id="Z78198">
    <property type="protein sequence ID" value="CAB01573.1"/>
    <property type="molecule type" value="Genomic_DNA"/>
</dbReference>
<dbReference type="PIR" id="T22716">
    <property type="entry name" value="T22716"/>
</dbReference>
<dbReference type="RefSeq" id="NP_506083.1">
    <property type="nucleotide sequence ID" value="NM_073682.7"/>
</dbReference>
<dbReference type="SMR" id="Q20822"/>
<dbReference type="BioGRID" id="44709">
    <property type="interactions" value="6"/>
</dbReference>
<dbReference type="FunCoup" id="Q20822">
    <property type="interactions" value="3212"/>
</dbReference>
<dbReference type="STRING" id="6239.F55C5.8.1"/>
<dbReference type="PaxDb" id="6239-F55C5.8"/>
<dbReference type="PeptideAtlas" id="Q20822"/>
<dbReference type="EnsemblMetazoa" id="F55C5.8.1">
    <property type="protein sequence ID" value="F55C5.8.1"/>
    <property type="gene ID" value="WBGene00010097"/>
</dbReference>
<dbReference type="GeneID" id="179686"/>
<dbReference type="KEGG" id="cel:CELE_F55C5.8"/>
<dbReference type="UCSC" id="F55C5.8">
    <property type="organism name" value="c. elegans"/>
</dbReference>
<dbReference type="AGR" id="WB:WBGene00010097"/>
<dbReference type="CTD" id="179686"/>
<dbReference type="WormBase" id="F55C5.8">
    <property type="protein sequence ID" value="CE20875"/>
    <property type="gene ID" value="WBGene00010097"/>
    <property type="gene designation" value="srpa-68"/>
</dbReference>
<dbReference type="eggNOG" id="KOG2460">
    <property type="taxonomic scope" value="Eukaryota"/>
</dbReference>
<dbReference type="GeneTree" id="ENSGT00390000011856"/>
<dbReference type="HOGENOM" id="CLU_018649_0_1_1"/>
<dbReference type="InParanoid" id="Q20822"/>
<dbReference type="OMA" id="DERFIHI"/>
<dbReference type="OrthoDB" id="10255118at2759"/>
<dbReference type="PhylomeDB" id="Q20822"/>
<dbReference type="Reactome" id="R-CEL-1799339">
    <property type="pathway name" value="SRP-dependent cotranslational protein targeting to membrane"/>
</dbReference>
<dbReference type="PRO" id="PR:Q20822"/>
<dbReference type="Proteomes" id="UP000001940">
    <property type="component" value="Chromosome V"/>
</dbReference>
<dbReference type="Bgee" id="WBGene00010097">
    <property type="expression patterns" value="Expressed in adult organism and 4 other cell types or tissues"/>
</dbReference>
<dbReference type="GO" id="GO:0005783">
    <property type="term" value="C:endoplasmic reticulum"/>
    <property type="evidence" value="ECO:0007669"/>
    <property type="project" value="UniProtKB-SubCell"/>
</dbReference>
<dbReference type="GO" id="GO:0005730">
    <property type="term" value="C:nucleolus"/>
    <property type="evidence" value="ECO:0007669"/>
    <property type="project" value="UniProtKB-SubCell"/>
</dbReference>
<dbReference type="GO" id="GO:0005786">
    <property type="term" value="C:signal recognition particle, endoplasmic reticulum targeting"/>
    <property type="evidence" value="ECO:0000318"/>
    <property type="project" value="GO_Central"/>
</dbReference>
<dbReference type="GO" id="GO:0008312">
    <property type="term" value="F:7S RNA binding"/>
    <property type="evidence" value="ECO:0007669"/>
    <property type="project" value="InterPro"/>
</dbReference>
<dbReference type="GO" id="GO:0030942">
    <property type="term" value="F:endoplasmic reticulum signal peptide binding"/>
    <property type="evidence" value="ECO:0007669"/>
    <property type="project" value="InterPro"/>
</dbReference>
<dbReference type="GO" id="GO:0005047">
    <property type="term" value="F:signal recognition particle binding"/>
    <property type="evidence" value="ECO:0000318"/>
    <property type="project" value="GO_Central"/>
</dbReference>
<dbReference type="GO" id="GO:0006614">
    <property type="term" value="P:SRP-dependent cotranslational protein targeting to membrane"/>
    <property type="evidence" value="ECO:0000318"/>
    <property type="project" value="GO_Central"/>
</dbReference>
<dbReference type="CDD" id="cd15481">
    <property type="entry name" value="SRP68-RBD"/>
    <property type="match status" value="1"/>
</dbReference>
<dbReference type="FunFam" id="1.10.3450.40:FF:000006">
    <property type="entry name" value="Signal recognition particle subunit SRP68"/>
    <property type="match status" value="1"/>
</dbReference>
<dbReference type="Gene3D" id="1.10.3450.40">
    <property type="entry name" value="Signal recognition particle, SRP68 subunit, RNA-binding domain"/>
    <property type="match status" value="1"/>
</dbReference>
<dbReference type="InterPro" id="IPR026258">
    <property type="entry name" value="SRP68"/>
</dbReference>
<dbReference type="InterPro" id="IPR034652">
    <property type="entry name" value="SRP68-RBD"/>
</dbReference>
<dbReference type="InterPro" id="IPR038253">
    <property type="entry name" value="SRP68_N_sf"/>
</dbReference>
<dbReference type="PANTHER" id="PTHR12860">
    <property type="entry name" value="SIGNAL RECOGNITION PARTICLE 68 KDA PROTEIN"/>
    <property type="match status" value="1"/>
</dbReference>
<dbReference type="PANTHER" id="PTHR12860:SF0">
    <property type="entry name" value="SIGNAL RECOGNITION PARTICLE SUBUNIT SRP68"/>
    <property type="match status" value="1"/>
</dbReference>
<dbReference type="Pfam" id="PF16969">
    <property type="entry name" value="SRP68"/>
    <property type="match status" value="1"/>
</dbReference>
<dbReference type="PIRSF" id="PIRSF038995">
    <property type="entry name" value="SRP68"/>
    <property type="match status" value="1"/>
</dbReference>
<keyword id="KW-0963">Cytoplasm</keyword>
<keyword id="KW-0256">Endoplasmic reticulum</keyword>
<keyword id="KW-0539">Nucleus</keyword>
<keyword id="KW-1185">Reference proteome</keyword>
<keyword id="KW-0687">Ribonucleoprotein</keyword>
<keyword id="KW-0694">RNA-binding</keyword>
<keyword id="KW-0733">Signal recognition particle</keyword>
<evidence type="ECO:0000250" key="1">
    <source>
        <dbReference type="UniProtKB" id="P38687"/>
    </source>
</evidence>
<evidence type="ECO:0000250" key="2">
    <source>
        <dbReference type="UniProtKB" id="Q00004"/>
    </source>
</evidence>
<evidence type="ECO:0000250" key="3">
    <source>
        <dbReference type="UniProtKB" id="Q9UHB9"/>
    </source>
</evidence>
<evidence type="ECO:0000256" key="4">
    <source>
        <dbReference type="SAM" id="MobiDB-lite"/>
    </source>
</evidence>
<evidence type="ECO:0000305" key="5"/>
<evidence type="ECO:0000312" key="6">
    <source>
        <dbReference type="WormBase" id="F55C5.8"/>
    </source>
</evidence>
<comment type="function">
    <text evidence="1 3">Component of the signal recognition particle (SRP) complex, a ribonucleoprotein complex that mediates the cotranslational targeting of secretory and membrane proteins to the endoplasmic reticulum (ER) (By similarity). The SRP complex interacts with the signal sequence in nascent secretory and membrane proteins and directs them to the membrane of the ER (By similarity). The SRP complex targets the ribosome-nascent chain complex to the SRP receptor (SR), which is anchored in the ER, where SR compaction and GTPase rearrangement drive cotranslational protein translocation into the ER (By similarity). Binds the signal recognition particle RNA (7SL RNA), srpa-72 binds to this complex subsequently (By similarity). The SRP complex possibly participates in the elongation arrest function (By similarity).</text>
</comment>
<comment type="subunit">
    <text evidence="2 3">Heterodimer with srpa-72 (By similarity). Srpa-68/srpa-72 heterodimer formation is stabilized by the presence of 7SL RNA (By similarity). Component of a signal recognition particle (SRP) complex that consists of a 7SL RNA molecule of 300 nucleotides and six protein subunits: srpa-72, srpa-68, SRP54, F37F2.2/SRP19, F25G6.8/SRP14 and ZK512.4/SRP9 (By similarity). Within the SRP complex, interacts (via C-terminus) with srpa-72 (via N-terminus) (By similarity).</text>
</comment>
<comment type="subcellular location">
    <subcellularLocation>
        <location evidence="3">Cytoplasm</location>
    </subcellularLocation>
    <subcellularLocation>
        <location evidence="3">Nucleus</location>
        <location evidence="3">Nucleolus</location>
    </subcellularLocation>
    <subcellularLocation>
        <location evidence="3">Endoplasmic reticulum</location>
    </subcellularLocation>
</comment>
<comment type="domain">
    <text evidence="3">The N-terminus is required for RNA-binding.</text>
</comment>
<comment type="similarity">
    <text evidence="5">Belongs to the SRP68 family.</text>
</comment>
<proteinExistence type="inferred from homology"/>
<feature type="chain" id="PRO_0000135229" description="Signal recognition particle subunit SRP68">
    <location>
        <begin position="1"/>
        <end position="622"/>
    </location>
</feature>
<feature type="region of interest" description="Disordered" evidence="4">
    <location>
        <begin position="576"/>
        <end position="622"/>
    </location>
</feature>
<feature type="compositionally biased region" description="Low complexity" evidence="4">
    <location>
        <begin position="585"/>
        <end position="595"/>
    </location>
</feature>
<protein>
    <recommendedName>
        <fullName evidence="5">Signal recognition particle subunit SRP68</fullName>
        <shortName>SRP68</shortName>
    </recommendedName>
    <alternativeName>
        <fullName>Probable signal recognition particle 68 kDa protein</fullName>
    </alternativeName>
</protein>
<accession>Q20822</accession>
<name>SRP68_CAEEL</name>